<protein>
    <recommendedName>
        <fullName>Uncharacterized protein ORF94</fullName>
    </recommendedName>
</protein>
<reference key="1">
    <citation type="journal article" date="2005" name="J. Gen. Virol.">
        <title>A novel class of herpesvirus with bivalve hosts.</title>
        <authorList>
            <person name="Davison A.J."/>
            <person name="Trus B.L."/>
            <person name="Cheng N."/>
            <person name="Steven A.C."/>
            <person name="Watson M.S."/>
            <person name="Cunningham C."/>
            <person name="Le Deuff R.M."/>
            <person name="Renault T."/>
        </authorList>
    </citation>
    <scope>NUCLEOTIDE SEQUENCE [LARGE SCALE GENOMIC DNA]</scope>
</reference>
<dbReference type="EMBL" id="AY509253">
    <property type="protein sequence ID" value="AAS00980.1"/>
    <property type="molecule type" value="Genomic_DNA"/>
</dbReference>
<dbReference type="RefSeq" id="YP_024633.1">
    <property type="nucleotide sequence ID" value="NC_005881.2"/>
</dbReference>
<dbReference type="KEGG" id="vg:2948183"/>
<dbReference type="Proteomes" id="UP000007021">
    <property type="component" value="Segment"/>
</dbReference>
<keyword id="KW-1185">Reference proteome</keyword>
<gene>
    <name type="ORF">ORF94</name>
</gene>
<accession>Q6R7D5</accession>
<organismHost>
    <name type="scientific">Magallana gigas</name>
    <name type="common">Pacific oyster</name>
    <name type="synonym">Crassostrea gigas</name>
    <dbReference type="NCBI Taxonomy" id="29159"/>
</organismHost>
<organismHost>
    <name type="scientific">Pecten maximus</name>
    <name type="common">King scallop</name>
    <name type="synonym">Pilgrim's clam</name>
    <dbReference type="NCBI Taxonomy" id="6579"/>
</organismHost>
<sequence length="347" mass="39830">MEFDKFKQSAFRTSKISAPSRLQGLGDRIDGVNDHKDAYHFYTNRGVRDVSNAGLCSMEYNDETLRAAAALSRELISAELVEENPELEEVVKRVSTYIDPLTEPEVRDLNKQSHGIYRMSDKSFNLTPNRADNYLLQYKAIITKRAGDGDTTYKDLEDKLNARCSRAEGCYYRKVYPEFKCAGPVAMPDSIKNIFTYVLPASPFKGKTINLILHMINNPMDEAGKSMSDPIVKAMSQCLVCTIINNAEKDFKISASQVNNKTEEPLYLMNIEDEDSEMFMTITIPQFDSCVAEVDVPRYTRVRLPMIRFREFYRPYQNPTTGIWEVIHYPEGWSNRDEKEDEFMSNV</sequence>
<proteinExistence type="predicted"/>
<organism>
    <name type="scientific">Ostreid herpesvirus 1 (isolate France)</name>
    <name type="common">OsHV-1</name>
    <name type="synonym">Pacific oyster herpesvirus</name>
    <dbReference type="NCBI Taxonomy" id="654903"/>
    <lineage>
        <taxon>Viruses</taxon>
        <taxon>Duplodnaviria</taxon>
        <taxon>Heunggongvirae</taxon>
        <taxon>Peploviricota</taxon>
        <taxon>Herviviricetes</taxon>
        <taxon>Herpesvirales</taxon>
        <taxon>Malacoherpesviridae</taxon>
        <taxon>Ostreavirus</taxon>
        <taxon>Ostreavirus ostreidmalaco1</taxon>
        <taxon>Ostreid herpesvirus 1</taxon>
    </lineage>
</organism>
<feature type="chain" id="PRO_0000385114" description="Uncharacterized protein ORF94">
    <location>
        <begin position="1"/>
        <end position="347"/>
    </location>
</feature>
<name>Y094_OSHVF</name>